<gene>
    <name type="primary">EDN3</name>
</gene>
<evidence type="ECO:0000250" key="1"/>
<evidence type="ECO:0000255" key="2"/>
<evidence type="ECO:0000256" key="3">
    <source>
        <dbReference type="SAM" id="MobiDB-lite"/>
    </source>
</evidence>
<evidence type="ECO:0000305" key="4"/>
<organism>
    <name type="scientific">Sus scrofa</name>
    <name type="common">Pig</name>
    <dbReference type="NCBI Taxonomy" id="9823"/>
    <lineage>
        <taxon>Eukaryota</taxon>
        <taxon>Metazoa</taxon>
        <taxon>Chordata</taxon>
        <taxon>Craniata</taxon>
        <taxon>Vertebrata</taxon>
        <taxon>Euteleostomi</taxon>
        <taxon>Mammalia</taxon>
        <taxon>Eutheria</taxon>
        <taxon>Laurasiatheria</taxon>
        <taxon>Artiodactyla</taxon>
        <taxon>Suina</taxon>
        <taxon>Suidae</taxon>
        <taxon>Sus</taxon>
    </lineage>
</organism>
<name>EDN3_PIG</name>
<feature type="signal peptide" evidence="2">
    <location>
        <begin position="1"/>
        <end position="17"/>
    </location>
</feature>
<feature type="propeptide" id="PRO_0000296393">
    <location>
        <begin position="18"/>
        <end position="80"/>
    </location>
</feature>
<feature type="peptide" id="PRO_0000296394" description="Endothelin-3">
    <location>
        <begin position="83"/>
        <end position="103"/>
    </location>
</feature>
<feature type="propeptide" id="PRO_0000296395">
    <location>
        <begin position="104"/>
        <end position="204"/>
    </location>
</feature>
<feature type="region of interest" description="Disordered" evidence="3">
    <location>
        <begin position="18"/>
        <end position="71"/>
    </location>
</feature>
<feature type="region of interest" description="Disordered" evidence="3">
    <location>
        <begin position="115"/>
        <end position="140"/>
    </location>
</feature>
<feature type="region of interest" description="Endothelin-like">
    <location>
        <begin position="144"/>
        <end position="158"/>
    </location>
</feature>
<feature type="region of interest" description="Disordered" evidence="3">
    <location>
        <begin position="166"/>
        <end position="204"/>
    </location>
</feature>
<feature type="compositionally biased region" description="Low complexity" evidence="3">
    <location>
        <begin position="127"/>
        <end position="140"/>
    </location>
</feature>
<feature type="site" description="Cleavage; by KEL" evidence="1">
    <location>
        <begin position="103"/>
        <end position="104"/>
    </location>
</feature>
<feature type="disulfide bond" evidence="1">
    <location>
        <begin position="83"/>
        <end position="97"/>
    </location>
</feature>
<feature type="disulfide bond" evidence="1">
    <location>
        <begin position="85"/>
        <end position="93"/>
    </location>
</feature>
<protein>
    <recommendedName>
        <fullName>Endothelin-3</fullName>
        <shortName>ET-3</shortName>
    </recommendedName>
    <alternativeName>
        <fullName>Preproendothelin-3</fullName>
        <shortName>PPET3</shortName>
    </alternativeName>
</protein>
<comment type="function">
    <text evidence="1">Endothelins are endothelium-derived vasoconstrictor peptides.</text>
</comment>
<comment type="subcellular location">
    <subcellularLocation>
        <location evidence="1">Secreted</location>
    </subcellularLocation>
</comment>
<comment type="similarity">
    <text evidence="4">Belongs to the endothelin/sarafotoxin family.</text>
</comment>
<reference key="1">
    <citation type="submission" date="2006-09" db="EMBL/GenBank/DDBJ databases">
        <title>Sequences and genetic variations of forty-four porcine coat color related genes.</title>
        <authorList>
            <person name="Okumura N."/>
            <person name="Matsumoto T."/>
            <person name="Hamasima N."/>
            <person name="Uenishi H."/>
            <person name="Ogawa T."/>
            <person name="Komatsuda A."/>
            <person name="Fukudome N."/>
            <person name="Ide H."/>
            <person name="Suzuki A."/>
            <person name="Kojima C."/>
            <person name="Awata T."/>
        </authorList>
    </citation>
    <scope>NUCLEOTIDE SEQUENCE [MRNA]</scope>
</reference>
<reference key="2">
    <citation type="submission" date="2007-05" db="EMBL/GenBank/DDBJ databases">
        <authorList>
            <consortium name="Porcine genome sequencing project"/>
        </authorList>
    </citation>
    <scope>NUCLEOTIDE SEQUENCE [LARGE SCALE GENOMIC DNA]</scope>
</reference>
<dbReference type="EMBL" id="AB271922">
    <property type="protein sequence ID" value="BAF62297.1"/>
    <property type="molecule type" value="mRNA"/>
</dbReference>
<dbReference type="EMBL" id="CR956624">
    <property type="protein sequence ID" value="CAN13224.1"/>
    <property type="molecule type" value="Genomic_DNA"/>
</dbReference>
<dbReference type="RefSeq" id="NP_001092052.1">
    <property type="nucleotide sequence ID" value="NM_001098582.2"/>
</dbReference>
<dbReference type="RefSeq" id="XP_020932826.1">
    <property type="nucleotide sequence ID" value="XM_021077167.1"/>
</dbReference>
<dbReference type="BMRB" id="A5A752"/>
<dbReference type="FunCoup" id="A5A752">
    <property type="interactions" value="135"/>
</dbReference>
<dbReference type="STRING" id="9823.ENSSSCP00000066984"/>
<dbReference type="PaxDb" id="9823-ENSSSCP00000008036"/>
<dbReference type="Ensembl" id="ENSSSCT00000008255.6">
    <property type="protein sequence ID" value="ENSSSCP00000008036.2"/>
    <property type="gene ID" value="ENSSSCG00000007527.6"/>
</dbReference>
<dbReference type="Ensembl" id="ENSSSCT00015002548.1">
    <property type="protein sequence ID" value="ENSSSCP00015000818.1"/>
    <property type="gene ID" value="ENSSSCG00015002079.1"/>
</dbReference>
<dbReference type="Ensembl" id="ENSSSCT00045042513.1">
    <property type="protein sequence ID" value="ENSSSCP00045029524.1"/>
    <property type="gene ID" value="ENSSSCG00045024871.1"/>
</dbReference>
<dbReference type="Ensembl" id="ENSSSCT00055027748.1">
    <property type="protein sequence ID" value="ENSSSCP00055022095.1"/>
    <property type="gene ID" value="ENSSSCG00055014030.1"/>
</dbReference>
<dbReference type="Ensembl" id="ENSSSCT00085045795">
    <property type="protein sequence ID" value="ENSSSCP00085031921"/>
    <property type="gene ID" value="ENSSSCG00085023863"/>
</dbReference>
<dbReference type="Ensembl" id="ENSSSCT00090003112">
    <property type="protein sequence ID" value="ENSSSCP00090001907"/>
    <property type="gene ID" value="ENSSSCG00090001898"/>
</dbReference>
<dbReference type="Ensembl" id="ENSSSCT00115010955">
    <property type="protein sequence ID" value="ENSSSCP00115010317"/>
    <property type="gene ID" value="ENSSSCG00115006342"/>
</dbReference>
<dbReference type="Ensembl" id="ENSSSCT00130022306">
    <property type="protein sequence ID" value="ENSSSCP00130015274"/>
    <property type="gene ID" value="ENSSSCG00130011946"/>
</dbReference>
<dbReference type="GeneID" id="100049663"/>
<dbReference type="KEGG" id="ssc:100049663"/>
<dbReference type="CTD" id="1908"/>
<dbReference type="VGNC" id="VGNC:96260">
    <property type="gene designation" value="EDN3"/>
</dbReference>
<dbReference type="eggNOG" id="ENOG502S4W0">
    <property type="taxonomic scope" value="Eukaryota"/>
</dbReference>
<dbReference type="GeneTree" id="ENSGT00950000183053"/>
<dbReference type="HOGENOM" id="CLU_090013_0_0_1"/>
<dbReference type="InParanoid" id="A5A752"/>
<dbReference type="OMA" id="TEEKDQC"/>
<dbReference type="OrthoDB" id="9943124at2759"/>
<dbReference type="TreeFam" id="TF333184"/>
<dbReference type="Reactome" id="R-SSC-375276">
    <property type="pathway name" value="Peptide ligand-binding receptors"/>
</dbReference>
<dbReference type="Reactome" id="R-SSC-416476">
    <property type="pathway name" value="G alpha (q) signalling events"/>
</dbReference>
<dbReference type="Proteomes" id="UP000008227">
    <property type="component" value="Chromosome 17"/>
</dbReference>
<dbReference type="Proteomes" id="UP000314985">
    <property type="component" value="Unplaced"/>
</dbReference>
<dbReference type="Proteomes" id="UP000694570">
    <property type="component" value="Unplaced"/>
</dbReference>
<dbReference type="Proteomes" id="UP000694571">
    <property type="component" value="Unplaced"/>
</dbReference>
<dbReference type="Proteomes" id="UP000694720">
    <property type="component" value="Unplaced"/>
</dbReference>
<dbReference type="Proteomes" id="UP000694722">
    <property type="component" value="Unplaced"/>
</dbReference>
<dbReference type="Proteomes" id="UP000694723">
    <property type="component" value="Unplaced"/>
</dbReference>
<dbReference type="Proteomes" id="UP000694724">
    <property type="component" value="Unplaced"/>
</dbReference>
<dbReference type="Proteomes" id="UP000694725">
    <property type="component" value="Unplaced"/>
</dbReference>
<dbReference type="Proteomes" id="UP000694726">
    <property type="component" value="Unplaced"/>
</dbReference>
<dbReference type="Proteomes" id="UP000694727">
    <property type="component" value="Unplaced"/>
</dbReference>
<dbReference type="Proteomes" id="UP000694728">
    <property type="component" value="Unplaced"/>
</dbReference>
<dbReference type="Bgee" id="ENSSSCG00000007527">
    <property type="expression patterns" value="Expressed in hindlimb bud and 23 other cell types or tissues"/>
</dbReference>
<dbReference type="ExpressionAtlas" id="A5A752">
    <property type="expression patterns" value="baseline"/>
</dbReference>
<dbReference type="GO" id="GO:0005615">
    <property type="term" value="C:extracellular space"/>
    <property type="evidence" value="ECO:0000318"/>
    <property type="project" value="GO_Central"/>
</dbReference>
<dbReference type="GO" id="GO:0031708">
    <property type="term" value="F:endothelin B receptor binding"/>
    <property type="evidence" value="ECO:0000318"/>
    <property type="project" value="GO_Central"/>
</dbReference>
<dbReference type="GO" id="GO:0005179">
    <property type="term" value="F:hormone activity"/>
    <property type="evidence" value="ECO:0000318"/>
    <property type="project" value="GO_Central"/>
</dbReference>
<dbReference type="GO" id="GO:0006874">
    <property type="term" value="P:intracellular calcium ion homeostasis"/>
    <property type="evidence" value="ECO:0000318"/>
    <property type="project" value="GO_Central"/>
</dbReference>
<dbReference type="GO" id="GO:0045987">
    <property type="term" value="P:positive regulation of smooth muscle contraction"/>
    <property type="evidence" value="ECO:0000318"/>
    <property type="project" value="GO_Central"/>
</dbReference>
<dbReference type="GO" id="GO:0003100">
    <property type="term" value="P:regulation of systemic arterial blood pressure by endothelin"/>
    <property type="evidence" value="ECO:0000318"/>
    <property type="project" value="GO_Central"/>
</dbReference>
<dbReference type="GO" id="GO:0019229">
    <property type="term" value="P:regulation of vasoconstriction"/>
    <property type="evidence" value="ECO:0007669"/>
    <property type="project" value="InterPro"/>
</dbReference>
<dbReference type="GO" id="GO:0014826">
    <property type="term" value="P:vein smooth muscle contraction"/>
    <property type="evidence" value="ECO:0000318"/>
    <property type="project" value="GO_Central"/>
</dbReference>
<dbReference type="InterPro" id="IPR020475">
    <property type="entry name" value="Endothelin"/>
</dbReference>
<dbReference type="InterPro" id="IPR019764">
    <property type="entry name" value="Endothelin_toxin_CS"/>
</dbReference>
<dbReference type="InterPro" id="IPR001928">
    <property type="entry name" value="Endothln-like_toxin"/>
</dbReference>
<dbReference type="PANTHER" id="PTHR13874">
    <property type="entry name" value="ENDOTHELIN"/>
    <property type="match status" value="1"/>
</dbReference>
<dbReference type="PANTHER" id="PTHR13874:SF11">
    <property type="entry name" value="ENDOTHELIN-3"/>
    <property type="match status" value="1"/>
</dbReference>
<dbReference type="Pfam" id="PF00322">
    <property type="entry name" value="Endothelin"/>
    <property type="match status" value="1"/>
</dbReference>
<dbReference type="PRINTS" id="PR00365">
    <property type="entry name" value="ENDOTHELIN"/>
</dbReference>
<dbReference type="SMART" id="SM00272">
    <property type="entry name" value="END"/>
    <property type="match status" value="2"/>
</dbReference>
<dbReference type="PROSITE" id="PS00270">
    <property type="entry name" value="ENDOTHELIN"/>
    <property type="match status" value="2"/>
</dbReference>
<proteinExistence type="evidence at transcript level"/>
<accession>A5A752</accession>
<sequence length="204" mass="22190">MELRLWFLFGLTVTSAAGPVPRPQPGDAGRSGVPRAPSATKETMAMVATRGPSPRSSGQEQEPGPFGELAAKGGPVRYRARRCTCFTYKDKECVYYCHLDIIWINTPERTVPYGLSNHRGSVRGRRSAGPSPQSSQPSRGTLRCACAESQDRACVYFCTRTLAARGASRTPETPDKEAGKPAGRATGGLHPRRLKSRTDKARRL</sequence>
<keyword id="KW-0165">Cleavage on pair of basic residues</keyword>
<keyword id="KW-1015">Disulfide bond</keyword>
<keyword id="KW-1185">Reference proteome</keyword>
<keyword id="KW-0964">Secreted</keyword>
<keyword id="KW-0732">Signal</keyword>
<keyword id="KW-0838">Vasoactive</keyword>
<keyword id="KW-0839">Vasoconstrictor</keyword>